<dbReference type="EMBL" id="AF027302">
    <property type="protein sequence ID" value="AAC70891.1"/>
    <property type="molecule type" value="mRNA"/>
</dbReference>
<dbReference type="EMBL" id="BA000025">
    <property type="protein sequence ID" value="BAB63325.1"/>
    <property type="molecule type" value="Genomic_DNA"/>
</dbReference>
<dbReference type="EMBL" id="AB088096">
    <property type="protein sequence ID" value="BAC54928.1"/>
    <property type="molecule type" value="Genomic_DNA"/>
</dbReference>
<dbReference type="EMBL" id="AL662800">
    <property type="status" value="NOT_ANNOTATED_CDS"/>
    <property type="molecule type" value="Genomic_DNA"/>
</dbReference>
<dbReference type="EMBL" id="AL662825">
    <property type="status" value="NOT_ANNOTATED_CDS"/>
    <property type="molecule type" value="Genomic_DNA"/>
</dbReference>
<dbReference type="EMBL" id="BX000357">
    <property type="status" value="NOT_ANNOTATED_CDS"/>
    <property type="molecule type" value="Genomic_DNA"/>
</dbReference>
<dbReference type="EMBL" id="BX119957">
    <property type="status" value="NOT_ANNOTATED_CDS"/>
    <property type="molecule type" value="Genomic_DNA"/>
</dbReference>
<dbReference type="EMBL" id="BX248518">
    <property type="status" value="NOT_ANNOTATED_CDS"/>
    <property type="molecule type" value="Genomic_DNA"/>
</dbReference>
<dbReference type="EMBL" id="CR753328">
    <property type="status" value="NOT_ANNOTATED_CDS"/>
    <property type="molecule type" value="Genomic_DNA"/>
</dbReference>
<dbReference type="EMBL" id="CR388372">
    <property type="status" value="NOT_ANNOTATED_CDS"/>
    <property type="molecule type" value="Genomic_DNA"/>
</dbReference>
<dbReference type="EMBL" id="BX927220">
    <property type="status" value="NOT_ANNOTATED_CDS"/>
    <property type="molecule type" value="Genomic_DNA"/>
</dbReference>
<dbReference type="EMBL" id="CR759778">
    <property type="status" value="NOT_ANNOTATED_CDS"/>
    <property type="molecule type" value="Genomic_DNA"/>
</dbReference>
<dbReference type="EMBL" id="CR847863">
    <property type="status" value="NOT_ANNOTATED_CDS"/>
    <property type="molecule type" value="Genomic_DNA"/>
</dbReference>
<dbReference type="EMBL" id="BC034488">
    <property type="protein sequence ID" value="AAH34488.1"/>
    <property type="molecule type" value="mRNA"/>
</dbReference>
<dbReference type="EMBL" id="BC112923">
    <property type="protein sequence ID" value="AAI12924.1"/>
    <property type="molecule type" value="mRNA"/>
</dbReference>
<dbReference type="EMBL" id="AL832430">
    <property type="protein sequence ID" value="CAH10648.1"/>
    <property type="molecule type" value="mRNA"/>
</dbReference>
<dbReference type="CCDS" id="CCDS34380.1">
    <molecule id="Q8NE71-1"/>
</dbReference>
<dbReference type="CCDS" id="CCDS34381.1">
    <molecule id="Q8NE71-2"/>
</dbReference>
<dbReference type="RefSeq" id="NP_001020262.1">
    <molecule id="Q8NE71-1"/>
    <property type="nucleotide sequence ID" value="NM_001025091.2"/>
</dbReference>
<dbReference type="RefSeq" id="NP_001081.1">
    <molecule id="Q8NE71-2"/>
    <property type="nucleotide sequence ID" value="NM_001090.3"/>
</dbReference>
<dbReference type="PDB" id="5ZXD">
    <property type="method" value="X-ray"/>
    <property type="resolution" value="2.29 A"/>
    <property type="chains" value="A/B=300-841"/>
</dbReference>
<dbReference type="PDBsum" id="5ZXD"/>
<dbReference type="SMR" id="Q8NE71"/>
<dbReference type="BioGRID" id="106541">
    <property type="interactions" value="212"/>
</dbReference>
<dbReference type="DIP" id="DIP-50666N"/>
<dbReference type="FunCoup" id="Q8NE71">
    <property type="interactions" value="2386"/>
</dbReference>
<dbReference type="IntAct" id="Q8NE71">
    <property type="interactions" value="49"/>
</dbReference>
<dbReference type="MINT" id="Q8NE71"/>
<dbReference type="STRING" id="9606.ENSP00000313603"/>
<dbReference type="TCDB" id="3.A.1.121.8">
    <property type="family name" value="the atp-binding cassette (abc) superfamily"/>
</dbReference>
<dbReference type="GlyGen" id="Q8NE71">
    <property type="glycosylation" value="1 site, 1 O-linked glycan (1 site)"/>
</dbReference>
<dbReference type="iPTMnet" id="Q8NE71"/>
<dbReference type="MetOSite" id="Q8NE71"/>
<dbReference type="PhosphoSitePlus" id="Q8NE71"/>
<dbReference type="SwissPalm" id="Q8NE71"/>
<dbReference type="BioMuta" id="ABCF1"/>
<dbReference type="DMDM" id="56417894"/>
<dbReference type="CPTAC" id="CPTAC-301"/>
<dbReference type="CPTAC" id="CPTAC-302"/>
<dbReference type="jPOST" id="Q8NE71"/>
<dbReference type="MassIVE" id="Q8NE71"/>
<dbReference type="PaxDb" id="9606-ENSP00000313603"/>
<dbReference type="PeptideAtlas" id="Q8NE71"/>
<dbReference type="ProteomicsDB" id="73130">
    <molecule id="Q8NE71-1"/>
</dbReference>
<dbReference type="ProteomicsDB" id="73131">
    <molecule id="Q8NE71-2"/>
</dbReference>
<dbReference type="Pumba" id="Q8NE71"/>
<dbReference type="Antibodypedia" id="2796">
    <property type="antibodies" value="305 antibodies from 33 providers"/>
</dbReference>
<dbReference type="DNASU" id="23"/>
<dbReference type="Ensembl" id="ENST00000326195.13">
    <molecule id="Q8NE71-1"/>
    <property type="protein sequence ID" value="ENSP00000313603.8"/>
    <property type="gene ID" value="ENSG00000204574.14"/>
</dbReference>
<dbReference type="Ensembl" id="ENST00000376545.7">
    <molecule id="Q8NE71-2"/>
    <property type="protein sequence ID" value="ENSP00000365728.3"/>
    <property type="gene ID" value="ENSG00000204574.14"/>
</dbReference>
<dbReference type="Ensembl" id="ENST00000383587.8">
    <molecule id="Q8NE71-2"/>
    <property type="protein sequence ID" value="ENSP00000373081.4"/>
    <property type="gene ID" value="ENSG00000206490.11"/>
</dbReference>
<dbReference type="Ensembl" id="ENST00000383588.8">
    <molecule id="Q8NE71-1"/>
    <property type="protein sequence ID" value="ENSP00000373082.4"/>
    <property type="gene ID" value="ENSG00000206490.11"/>
</dbReference>
<dbReference type="Ensembl" id="ENST00000412443.6">
    <molecule id="Q8NE71-2"/>
    <property type="protein sequence ID" value="ENSP00000404726.2"/>
    <property type="gene ID" value="ENSG00000236342.8"/>
</dbReference>
<dbReference type="Ensembl" id="ENST00000419893.6">
    <molecule id="Q8NE71-1"/>
    <property type="protein sequence ID" value="ENSP00000389065.2"/>
    <property type="gene ID" value="ENSG00000232169.9"/>
</dbReference>
<dbReference type="Ensembl" id="ENST00000420257.6">
    <molecule id="Q8NE71-2"/>
    <property type="protein sequence ID" value="ENSP00000391102.2"/>
    <property type="gene ID" value="ENSG00000225989.9"/>
</dbReference>
<dbReference type="Ensembl" id="ENST00000421042.6">
    <molecule id="Q8NE71-2"/>
    <property type="protein sequence ID" value="ENSP00000393143.2"/>
    <property type="gene ID" value="ENSG00000231129.8"/>
</dbReference>
<dbReference type="Ensembl" id="ENST00000423247.6">
    <molecule id="Q8NE71-1"/>
    <property type="protein sequence ID" value="ENSP00000411327.2"/>
    <property type="gene ID" value="ENSG00000225989.9"/>
</dbReference>
<dbReference type="Ensembl" id="ENST00000426219.6">
    <molecule id="Q8NE71-1"/>
    <property type="protein sequence ID" value="ENSP00000414373.2"/>
    <property type="gene ID" value="ENSG00000231129.8"/>
</dbReference>
<dbReference type="Ensembl" id="ENST00000448939.6">
    <molecule id="Q8NE71-2"/>
    <property type="protein sequence ID" value="ENSP00000403526.2"/>
    <property type="gene ID" value="ENSG00000232169.9"/>
</dbReference>
<dbReference type="Ensembl" id="ENST00000452530.6">
    <molecule id="Q8NE71-2"/>
    <property type="protein sequence ID" value="ENSP00000389472.2"/>
    <property type="gene ID" value="ENSG00000236149.9"/>
</dbReference>
<dbReference type="Ensembl" id="ENST00000457078.6">
    <molecule id="Q8NE71-1"/>
    <property type="protein sequence ID" value="ENSP00000412553.2"/>
    <property type="gene ID" value="ENSG00000236342.8"/>
</dbReference>
<dbReference type="Ensembl" id="ENST00000457111.6">
    <molecule id="Q8NE71-1"/>
    <property type="protein sequence ID" value="ENSP00000413319.2"/>
    <property type="gene ID" value="ENSG00000236149.9"/>
</dbReference>
<dbReference type="GeneID" id="23"/>
<dbReference type="KEGG" id="hsa:23"/>
<dbReference type="MANE-Select" id="ENST00000326195.13">
    <property type="protein sequence ID" value="ENSP00000313603.8"/>
    <property type="RefSeq nucleotide sequence ID" value="NM_001025091.2"/>
    <property type="RefSeq protein sequence ID" value="NP_001020262.1"/>
</dbReference>
<dbReference type="UCSC" id="uc003nql.4">
    <molecule id="Q8NE71-1"/>
    <property type="organism name" value="human"/>
</dbReference>
<dbReference type="AGR" id="HGNC:70"/>
<dbReference type="CTD" id="23"/>
<dbReference type="DisGeNET" id="23"/>
<dbReference type="GeneCards" id="ABCF1"/>
<dbReference type="HGNC" id="HGNC:70">
    <property type="gene designation" value="ABCF1"/>
</dbReference>
<dbReference type="HPA" id="ENSG00000204574">
    <property type="expression patterns" value="Low tissue specificity"/>
</dbReference>
<dbReference type="MalaCards" id="ABCF1"/>
<dbReference type="MIM" id="603429">
    <property type="type" value="gene"/>
</dbReference>
<dbReference type="neXtProt" id="NX_Q8NE71"/>
<dbReference type="OpenTargets" id="ENSG00000204574"/>
<dbReference type="PharmGKB" id="PA24405"/>
<dbReference type="VEuPathDB" id="HostDB:ENSG00000204574"/>
<dbReference type="eggNOG" id="KOG0066">
    <property type="taxonomic scope" value="Eukaryota"/>
</dbReference>
<dbReference type="GeneTree" id="ENSGT00940000158329"/>
<dbReference type="HOGENOM" id="CLU_000604_36_5_1"/>
<dbReference type="InParanoid" id="Q8NE71"/>
<dbReference type="OMA" id="ARLVLCM"/>
<dbReference type="OrthoDB" id="2110130at2759"/>
<dbReference type="PAN-GO" id="Q8NE71">
    <property type="GO annotations" value="1 GO annotation based on evolutionary models"/>
</dbReference>
<dbReference type="PhylomeDB" id="Q8NE71"/>
<dbReference type="TreeFam" id="TF105207"/>
<dbReference type="PathwayCommons" id="Q8NE71"/>
<dbReference type="Reactome" id="R-HSA-382556">
    <property type="pathway name" value="ABC-family proteins mediated transport"/>
</dbReference>
<dbReference type="SignaLink" id="Q8NE71"/>
<dbReference type="SIGNOR" id="Q8NE71"/>
<dbReference type="BioGRID-ORCS" id="23">
    <property type="hits" value="718 hits in 1167 CRISPR screens"/>
</dbReference>
<dbReference type="CD-CODE" id="91857CE7">
    <property type="entry name" value="Nucleolus"/>
</dbReference>
<dbReference type="CD-CODE" id="DEE660B4">
    <property type="entry name" value="Stress granule"/>
</dbReference>
<dbReference type="ChiTaRS" id="ABCF1">
    <property type="organism name" value="human"/>
</dbReference>
<dbReference type="GeneWiki" id="ABCF1"/>
<dbReference type="GenomeRNAi" id="23"/>
<dbReference type="Pharos" id="Q8NE71">
    <property type="development level" value="Tbio"/>
</dbReference>
<dbReference type="PRO" id="PR:Q8NE71"/>
<dbReference type="Proteomes" id="UP000005640">
    <property type="component" value="Chromosome 6"/>
</dbReference>
<dbReference type="RNAct" id="Q8NE71">
    <property type="molecule type" value="protein"/>
</dbReference>
<dbReference type="Bgee" id="ENSG00000204574">
    <property type="expression patterns" value="Expressed in sural nerve and 101 other cell types or tissues"/>
</dbReference>
<dbReference type="ExpressionAtlas" id="Q8NE71">
    <property type="expression patterns" value="baseline and differential"/>
</dbReference>
<dbReference type="GO" id="GO:0005737">
    <property type="term" value="C:cytoplasm"/>
    <property type="evidence" value="ECO:0000314"/>
    <property type="project" value="UniProtKB"/>
</dbReference>
<dbReference type="GO" id="GO:0005829">
    <property type="term" value="C:cytosol"/>
    <property type="evidence" value="ECO:0000314"/>
    <property type="project" value="HPA"/>
</dbReference>
<dbReference type="GO" id="GO:0016020">
    <property type="term" value="C:membrane"/>
    <property type="evidence" value="ECO:0007005"/>
    <property type="project" value="UniProtKB"/>
</dbReference>
<dbReference type="GO" id="GO:0005635">
    <property type="term" value="C:nuclear envelope"/>
    <property type="evidence" value="ECO:0000314"/>
    <property type="project" value="UniProtKB"/>
</dbReference>
<dbReference type="GO" id="GO:0005654">
    <property type="term" value="C:nucleoplasm"/>
    <property type="evidence" value="ECO:0000314"/>
    <property type="project" value="UniProtKB"/>
</dbReference>
<dbReference type="GO" id="GO:0005524">
    <property type="term" value="F:ATP binding"/>
    <property type="evidence" value="ECO:0000314"/>
    <property type="project" value="UniProtKB"/>
</dbReference>
<dbReference type="GO" id="GO:0016887">
    <property type="term" value="F:ATP hydrolysis activity"/>
    <property type="evidence" value="ECO:0007669"/>
    <property type="project" value="InterPro"/>
</dbReference>
<dbReference type="GO" id="GO:0043022">
    <property type="term" value="F:ribosome binding"/>
    <property type="evidence" value="ECO:0000314"/>
    <property type="project" value="UniProtKB"/>
</dbReference>
<dbReference type="GO" id="GO:0003723">
    <property type="term" value="F:RNA binding"/>
    <property type="evidence" value="ECO:0007005"/>
    <property type="project" value="UniProtKB"/>
</dbReference>
<dbReference type="GO" id="GO:0008494">
    <property type="term" value="F:translation activator activity"/>
    <property type="evidence" value="ECO:0000314"/>
    <property type="project" value="UniProtKB"/>
</dbReference>
<dbReference type="GO" id="GO:0008135">
    <property type="term" value="F:translation factor activity, RNA binding"/>
    <property type="evidence" value="ECO:0000304"/>
    <property type="project" value="ProtInc"/>
</dbReference>
<dbReference type="GO" id="GO:0006954">
    <property type="term" value="P:inflammatory response"/>
    <property type="evidence" value="ECO:0000304"/>
    <property type="project" value="ProtInc"/>
</dbReference>
<dbReference type="GO" id="GO:0045727">
    <property type="term" value="P:positive regulation of translation"/>
    <property type="evidence" value="ECO:0000314"/>
    <property type="project" value="UniProtKB"/>
</dbReference>
<dbReference type="GO" id="GO:0006412">
    <property type="term" value="P:translation"/>
    <property type="evidence" value="ECO:0000304"/>
    <property type="project" value="ProtInc"/>
</dbReference>
<dbReference type="GO" id="GO:0006413">
    <property type="term" value="P:translational initiation"/>
    <property type="evidence" value="ECO:0000315"/>
    <property type="project" value="UniProtKB"/>
</dbReference>
<dbReference type="CDD" id="cd03221">
    <property type="entry name" value="ABCF_EF-3"/>
    <property type="match status" value="2"/>
</dbReference>
<dbReference type="FunFam" id="3.40.50.300:FF:000471">
    <property type="entry name" value="ATP-binding cassette, sub-family F (GCN20), member 1"/>
    <property type="match status" value="1"/>
</dbReference>
<dbReference type="FunFam" id="3.40.50.300:FF:000472">
    <property type="entry name" value="ATP-binding cassette, sub-family F (GCN20), member 1"/>
    <property type="match status" value="1"/>
</dbReference>
<dbReference type="Gene3D" id="3.40.50.300">
    <property type="entry name" value="P-loop containing nucleotide triphosphate hydrolases"/>
    <property type="match status" value="2"/>
</dbReference>
<dbReference type="InterPro" id="IPR003593">
    <property type="entry name" value="AAA+_ATPase"/>
</dbReference>
<dbReference type="InterPro" id="IPR003439">
    <property type="entry name" value="ABC_transporter-like_ATP-bd"/>
</dbReference>
<dbReference type="InterPro" id="IPR017871">
    <property type="entry name" value="ABC_transporter-like_CS"/>
</dbReference>
<dbReference type="InterPro" id="IPR050611">
    <property type="entry name" value="ABCF_EF3_subfamily"/>
</dbReference>
<dbReference type="InterPro" id="IPR027417">
    <property type="entry name" value="P-loop_NTPase"/>
</dbReference>
<dbReference type="PANTHER" id="PTHR19211:SF126">
    <property type="entry name" value="ATP-BINDING CASSETTE SUB-FAMILY F MEMBER 1"/>
    <property type="match status" value="1"/>
</dbReference>
<dbReference type="PANTHER" id="PTHR19211">
    <property type="entry name" value="ATP-BINDING TRANSPORT PROTEIN-RELATED"/>
    <property type="match status" value="1"/>
</dbReference>
<dbReference type="Pfam" id="PF00005">
    <property type="entry name" value="ABC_tran"/>
    <property type="match status" value="2"/>
</dbReference>
<dbReference type="SMART" id="SM00382">
    <property type="entry name" value="AAA"/>
    <property type="match status" value="2"/>
</dbReference>
<dbReference type="SUPFAM" id="SSF52540">
    <property type="entry name" value="P-loop containing nucleoside triphosphate hydrolases"/>
    <property type="match status" value="2"/>
</dbReference>
<dbReference type="PROSITE" id="PS00211">
    <property type="entry name" value="ABC_TRANSPORTER_1"/>
    <property type="match status" value="2"/>
</dbReference>
<dbReference type="PROSITE" id="PS50893">
    <property type="entry name" value="ABC_TRANSPORTER_2"/>
    <property type="match status" value="2"/>
</dbReference>
<protein>
    <recommendedName>
        <fullName>ATP-binding cassette sub-family F member 1</fullName>
    </recommendedName>
    <alternativeName>
        <fullName>ATP-binding cassette 50</fullName>
    </alternativeName>
    <alternativeName>
        <fullName>TNF-alpha-stimulated ABC protein</fullName>
    </alternativeName>
</protein>
<comment type="function">
    <text evidence="4">Isoform 2 is required for efficient Cap- and IRES-mediated mRNA translation initiation. Isoform 2 is not involved in the ribosome biogenesis.</text>
</comment>
<comment type="subunit">
    <text evidence="3">Isoform 2 interacts (via N-terminus) with EIF2S1; the interaction is independent of its phosphorylated status. Isoform 2 associates (via both ABC transporter domains) with the ribosomes.</text>
</comment>
<comment type="subcellular location">
    <molecule>Isoform 2</molecule>
    <subcellularLocation>
        <location evidence="4">Cytoplasm</location>
    </subcellularLocation>
    <subcellularLocation>
        <location evidence="4">Nucleus</location>
        <location evidence="4">Nucleoplasm</location>
    </subcellularLocation>
    <subcellularLocation>
        <location evidence="4">Nucleus envelope</location>
    </subcellularLocation>
</comment>
<comment type="alternative products">
    <event type="alternative splicing"/>
    <isoform>
        <id>Q8NE71-1</id>
        <name>1</name>
        <sequence type="displayed"/>
    </isoform>
    <isoform>
        <id>Q8NE71-2</id>
        <name>2</name>
        <sequence type="described" ref="VSP_012078"/>
    </isoform>
</comment>
<comment type="tissue specificity">
    <text evidence="5">Ubiquitous.</text>
</comment>
<comment type="induction">
    <text>By TNF in cultured synoviocytes.</text>
</comment>
<comment type="PTM">
    <text evidence="3">Isoform 2 is phosphorylated at phosphoserine and phosphothreonine. Isoform 2 phosphorylation on Ser-109 and Ser-140 by CK2 inhibits association of EIF2 with ribosomes.</text>
</comment>
<comment type="similarity">
    <text evidence="7">Belongs to the ABC transporter superfamily. ABCF family. EF3 subfamily.</text>
</comment>
<comment type="online information" name="ABCMdb">
    <link uri="http://abcm2.hegelab.org/search"/>
    <text>Database for mutations in ABC proteins</text>
</comment>
<keyword id="KW-0002">3D-structure</keyword>
<keyword id="KW-0010">Activator</keyword>
<keyword id="KW-0025">Alternative splicing</keyword>
<keyword id="KW-0067">ATP-binding</keyword>
<keyword id="KW-0963">Cytoplasm</keyword>
<keyword id="KW-0547">Nucleotide-binding</keyword>
<keyword id="KW-0539">Nucleus</keyword>
<keyword id="KW-0597">Phosphoprotein</keyword>
<keyword id="KW-1267">Proteomics identification</keyword>
<keyword id="KW-1185">Reference proteome</keyword>
<keyword id="KW-0677">Repeat</keyword>
<gene>
    <name type="primary">ABCF1</name>
    <name type="synonym">ABC50</name>
</gene>
<name>ABCF1_HUMAN</name>
<sequence length="845" mass="95926">MPKAPKQQPPEPEWIGDGESTSPSDKVVKKGKKDKKIKKTFFEELAVEDKQAGEEEKVLKEKEQQQQQQQQQQKKKRDTRKGRRKKDVDDDGEEKELMERLKKLSVPTSDEEDEVPAPKPRGGKKTKGGNVFAALIQDQSEEEEEEEKHPPKPAKPEKNRINKAVSEEQQPALKGKKGKEEKSKGKAKPQNKFAALDNEEEDKEEEIIKEKEPPKQGKEKAKKAEQGSEEEGEGEEEEEEGGESKADDPYAHLSKKEKKKLKKQMEYERQVASLKAANAAENDFSVSQAEMSSRQAMLENASDIKLEKFSISAHGKELFVNADLYIVAGRRYGLVGPNGKGKTTLLKHIANRALSIPPNIDVLLCEQEVVADETPAVQAVLRADTKRLKLLEEERRLQGQLEQGDDTAAERLEKVYEELRATGAAAAEAKARRILAGLGFDPEMQNRPTQKFSGGWRMRVSLARALFMEPTLLMLDEPTNHLDLNAVIWLNNYLQGWRKTLLIVSHDQGFLDDVCTDIIHLDAQRLHYYRGNYMTFKKMYQQKQKELLKQYEKQEKKLKELKAGGKSTKQAEKQTKEALTRKQQKCRRKNQDEESQEAPELLKRPKEYTVRFTFPDPPPLSPPVLGLHGVTFGYQGQKPLFKNLDFGIDMDSRICIVGPNGVGKSTLLLLLTGKLTPTHGEMRKNHRLKIGFFNQQYAEQLRMEETPTEYLQRGFNLPYQDARKCLGRFGLESHAHTIQICKLSGGQKARVVFAELACREPDVLILDEPTNNLDIESIDALGEAINEYKGAVIVVSHDARLITETNCQLWVVEEQSVSQIDGDFEDYKREVLEALGEVMVSRPRE</sequence>
<feature type="chain" id="PRO_0000093318" description="ATP-binding cassette sub-family F member 1">
    <location>
        <begin position="1"/>
        <end position="845"/>
    </location>
</feature>
<feature type="domain" description="ABC transporter 1" evidence="1">
    <location>
        <begin position="304"/>
        <end position="548"/>
    </location>
</feature>
<feature type="domain" description="ABC transporter 2" evidence="1">
    <location>
        <begin position="625"/>
        <end position="840"/>
    </location>
</feature>
<feature type="region of interest" description="Disordered" evidence="2">
    <location>
        <begin position="1"/>
        <end position="261"/>
    </location>
</feature>
<feature type="region of interest" description="Disordered" evidence="2">
    <location>
        <begin position="559"/>
        <end position="602"/>
    </location>
</feature>
<feature type="compositionally biased region" description="Basic residues" evidence="2">
    <location>
        <begin position="29"/>
        <end position="39"/>
    </location>
</feature>
<feature type="compositionally biased region" description="Basic and acidic residues" evidence="2">
    <location>
        <begin position="47"/>
        <end position="64"/>
    </location>
</feature>
<feature type="compositionally biased region" description="Basic residues" evidence="2">
    <location>
        <begin position="73"/>
        <end position="85"/>
    </location>
</feature>
<feature type="compositionally biased region" description="Basic and acidic residues" evidence="2">
    <location>
        <begin position="147"/>
        <end position="160"/>
    </location>
</feature>
<feature type="compositionally biased region" description="Basic and acidic residues" evidence="2">
    <location>
        <begin position="206"/>
        <end position="226"/>
    </location>
</feature>
<feature type="compositionally biased region" description="Acidic residues" evidence="2">
    <location>
        <begin position="227"/>
        <end position="241"/>
    </location>
</feature>
<feature type="compositionally biased region" description="Basic and acidic residues" evidence="2">
    <location>
        <begin position="559"/>
        <end position="580"/>
    </location>
</feature>
<feature type="binding site" evidence="1">
    <location>
        <begin position="336"/>
        <end position="343"/>
    </location>
    <ligand>
        <name>ATP</name>
        <dbReference type="ChEBI" id="CHEBI:30616"/>
        <label>1</label>
    </ligand>
</feature>
<feature type="binding site" evidence="1">
    <location>
        <begin position="658"/>
        <end position="665"/>
    </location>
    <ligand>
        <name>ATP</name>
        <dbReference type="ChEBI" id="CHEBI:30616"/>
        <label>2</label>
    </ligand>
</feature>
<feature type="modified residue" description="Phosphoserine" evidence="14 16">
    <location>
        <position position="22"/>
    </location>
</feature>
<feature type="modified residue" description="Phosphoserine" evidence="12">
    <location>
        <position position="24"/>
    </location>
</feature>
<feature type="modified residue" description="Phosphoserine" evidence="9 14 16 17">
    <location>
        <position position="105"/>
    </location>
</feature>
<feature type="modified residue" description="Phosphothreonine" evidence="9 13 14 15 16 17">
    <location>
        <position position="108"/>
    </location>
</feature>
<feature type="modified residue" description="Phosphoserine; by CK2" evidence="3 9 13 14 15 16">
    <location>
        <position position="109"/>
    </location>
</feature>
<feature type="modified residue" description="Phosphoserine; by CK2" evidence="3 9 13 14 15 16">
    <location>
        <position position="140"/>
    </location>
</feature>
<feature type="modified residue" description="Phosphoserine" evidence="15 16">
    <location>
        <position position="166"/>
    </location>
</feature>
<feature type="modified residue" description="Phosphoserine" evidence="8 9 11 12 13 14 15 16">
    <location>
        <position position="228"/>
    </location>
</feature>
<feature type="modified residue" description="Phosphoserine" evidence="10 16">
    <location>
        <position position="595"/>
    </location>
</feature>
<feature type="splice variant" id="VSP_012078" description="In isoform 2." evidence="6">
    <location>
        <begin position="226"/>
        <end position="263"/>
    </location>
</feature>
<feature type="sequence variant" id="VAR_048136" description="In dbSNP:rs6902544.">
    <original>N</original>
    <variation>D</variation>
    <location>
        <position position="198"/>
    </location>
</feature>
<feature type="mutagenesis site" description="Reduces phosphorylation. Inhibits strongly phosphorylation by CK2; when associated with S-140. Does not inhibit interaction with EIF2; when associated with S-140. Does not inhibit association with ribosomes; when associated with S-140. Reduces EIF2 interaction with ribosomes; when associated with S-140. Does not inhibit protein synthesis; when associated with A-140." evidence="3">
    <original>S</original>
    <variation>A</variation>
    <location>
        <position position="109"/>
    </location>
</feature>
<feature type="mutagenesis site" description="Reduces phosphorylation. Inhibits strongly phosphorylation by CK2; when associated with S-109. Does not inhibits interaction with EIF2; when associated with S-109. Does not inhibit association with ribosomes; when associated with S-109. Reduces EIF2 interaction with ribosomes; when associated with S-109. Does not inhibit protein synthesis; when associated with A-109." evidence="3">
    <original>S</original>
    <variation>A</variation>
    <location>
        <position position="140"/>
    </location>
</feature>
<feature type="mutagenesis site" description="Does not inhibit ribosome binding. Reduces ATP-binding. Inhibits ATP-binding and reduces protein synthesis; when associated with M-664. Shows an enhanced association with polyribosomes; when associated with M-664. Does not inhibit IRES-mediated protein synthesis; when associated with M-664." evidence="4">
    <original>K</original>
    <variation>M</variation>
    <location>
        <position position="342"/>
    </location>
</feature>
<feature type="mutagenesis site" description="Does not inhibit ribosome binding." evidence="4">
    <original>Q</original>
    <variation>E</variation>
    <location>
        <position position="367"/>
    </location>
</feature>
<feature type="mutagenesis site" description="Does not inhibit ribosome binding." evidence="4">
    <original>G</original>
    <variation>D</variation>
    <location>
        <position position="454"/>
    </location>
</feature>
<feature type="mutagenesis site" description="Does not inhibit ribosome binding. Reduces protein synthesis; when associated with Q-768." evidence="4">
    <original>E</original>
    <variation>Q</variation>
    <location>
        <position position="477"/>
    </location>
</feature>
<feature type="mutagenesis site" description="Does not inhibit ribosome binding." evidence="4">
    <original>H</original>
    <variation>L</variation>
    <location>
        <position position="506"/>
    </location>
</feature>
<feature type="mutagenesis site" description="Does not inhibit ribosome binding. Reduces ATP-binding. Inhibits ATP-binding and reduces protein synthesis; when associated with M-342. Shows a reduced association with polyribosomes; when associated with M-664. Does not inhibit IRES-mediated protein synthesis; when associated with M-664." evidence="4">
    <original>K</original>
    <variation>M</variation>
    <location>
        <position position="664"/>
    </location>
</feature>
<feature type="mutagenesis site" description="Does not inhibit ribosome binding." evidence="4">
    <original>Q</original>
    <variation>E</variation>
    <location>
        <position position="695"/>
    </location>
</feature>
<feature type="mutagenesis site" description="Does not inhibit ribosome binding." evidence="4">
    <original>G</original>
    <variation>D</variation>
    <location>
        <position position="745"/>
    </location>
</feature>
<feature type="mutagenesis site" description="Does not inhibit ribosome binding. Reduces protein synthesis; when associated with Q-477." evidence="4">
    <original>E</original>
    <variation>Q</variation>
    <location>
        <position position="768"/>
    </location>
</feature>
<feature type="mutagenesis site" description="Does not inhibit ribosome binding." evidence="4">
    <original>H</original>
    <variation>L</variation>
    <location>
        <position position="797"/>
    </location>
</feature>
<feature type="sequence conflict" description="In Ref. 5; AAH34488." evidence="7" ref="5">
    <original>S</original>
    <variation>P</variation>
    <location>
        <position position="166"/>
    </location>
</feature>
<feature type="strand" evidence="18">
    <location>
        <begin position="304"/>
        <end position="313"/>
    </location>
</feature>
<feature type="strand" evidence="18">
    <location>
        <begin position="316"/>
        <end position="326"/>
    </location>
</feature>
<feature type="strand" evidence="18">
    <location>
        <begin position="331"/>
        <end position="335"/>
    </location>
</feature>
<feature type="helix" evidence="18">
    <location>
        <begin position="342"/>
        <end position="350"/>
    </location>
</feature>
<feature type="strand" evidence="18">
    <location>
        <begin position="361"/>
        <end position="363"/>
    </location>
</feature>
<feature type="helix" evidence="18">
    <location>
        <begin position="374"/>
        <end position="379"/>
    </location>
</feature>
<feature type="helix" evidence="18">
    <location>
        <begin position="383"/>
        <end position="403"/>
    </location>
</feature>
<feature type="helix" evidence="18">
    <location>
        <begin position="408"/>
        <end position="419"/>
    </location>
</feature>
<feature type="helix" evidence="18">
    <location>
        <begin position="424"/>
        <end position="437"/>
    </location>
</feature>
<feature type="helix" evidence="18">
    <location>
        <begin position="442"/>
        <end position="445"/>
    </location>
</feature>
<feature type="helix" evidence="18">
    <location>
        <begin position="449"/>
        <end position="451"/>
    </location>
</feature>
<feature type="helix" evidence="18">
    <location>
        <begin position="454"/>
        <end position="468"/>
    </location>
</feature>
<feature type="strand" evidence="18">
    <location>
        <begin position="471"/>
        <end position="477"/>
    </location>
</feature>
<feature type="turn" evidence="18">
    <location>
        <begin position="478"/>
        <end position="481"/>
    </location>
</feature>
<feature type="helix" evidence="18">
    <location>
        <begin position="484"/>
        <end position="495"/>
    </location>
</feature>
<feature type="strand" evidence="18">
    <location>
        <begin position="499"/>
        <end position="504"/>
    </location>
</feature>
<feature type="helix" evidence="18">
    <location>
        <begin position="508"/>
        <end position="514"/>
    </location>
</feature>
<feature type="strand" evidence="18">
    <location>
        <begin position="516"/>
        <end position="522"/>
    </location>
</feature>
<feature type="strand" evidence="18">
    <location>
        <begin position="525"/>
        <end position="531"/>
    </location>
</feature>
<feature type="helix" evidence="18">
    <location>
        <begin position="533"/>
        <end position="563"/>
    </location>
</feature>
<feature type="strand" evidence="18">
    <location>
        <begin position="625"/>
        <end position="632"/>
    </location>
</feature>
<feature type="strand" evidence="18">
    <location>
        <begin position="640"/>
        <end position="648"/>
    </location>
</feature>
<feature type="strand" evidence="18">
    <location>
        <begin position="653"/>
        <end position="657"/>
    </location>
</feature>
<feature type="helix" evidence="18">
    <location>
        <begin position="664"/>
        <end position="672"/>
    </location>
</feature>
<feature type="strand" evidence="18">
    <location>
        <begin position="673"/>
        <end position="675"/>
    </location>
</feature>
<feature type="strand" evidence="18">
    <location>
        <begin position="678"/>
        <end position="684"/>
    </location>
</feature>
<feature type="strand" evidence="18">
    <location>
        <begin position="690"/>
        <end position="693"/>
    </location>
</feature>
<feature type="helix" evidence="18">
    <location>
        <begin position="695"/>
        <end position="698"/>
    </location>
</feature>
<feature type="helix" evidence="18">
    <location>
        <begin position="707"/>
        <end position="715"/>
    </location>
</feature>
<feature type="helix" evidence="18">
    <location>
        <begin position="719"/>
        <end position="728"/>
    </location>
</feature>
<feature type="helix" evidence="18">
    <location>
        <begin position="733"/>
        <end position="737"/>
    </location>
</feature>
<feature type="helix" evidence="18">
    <location>
        <begin position="740"/>
        <end position="742"/>
    </location>
</feature>
<feature type="helix" evidence="18">
    <location>
        <begin position="745"/>
        <end position="758"/>
    </location>
</feature>
<feature type="strand" evidence="18">
    <location>
        <begin position="762"/>
        <end position="768"/>
    </location>
</feature>
<feature type="turn" evidence="18">
    <location>
        <begin position="769"/>
        <end position="772"/>
    </location>
</feature>
<feature type="helix" evidence="18">
    <location>
        <begin position="775"/>
        <end position="787"/>
    </location>
</feature>
<feature type="strand" evidence="18">
    <location>
        <begin position="790"/>
        <end position="795"/>
    </location>
</feature>
<feature type="helix" evidence="18">
    <location>
        <begin position="799"/>
        <end position="804"/>
    </location>
</feature>
<feature type="strand" evidence="18">
    <location>
        <begin position="808"/>
        <end position="813"/>
    </location>
</feature>
<feature type="strand" evidence="18">
    <location>
        <begin position="816"/>
        <end position="820"/>
    </location>
</feature>
<feature type="helix" evidence="18">
    <location>
        <begin position="824"/>
        <end position="834"/>
    </location>
</feature>
<proteinExistence type="evidence at protein level"/>
<reference key="1">
    <citation type="journal article" date="1998" name="Genomics">
        <title>ABC50, a novel human ATP-binding cassette protein found in tumor necrosis factor-alpha-stimulated synoviocytes.</title>
        <authorList>
            <person name="Richard M."/>
            <person name="Drouin R."/>
            <person name="Beaulieu A.D."/>
        </authorList>
    </citation>
    <scope>NUCLEOTIDE SEQUENCE [MRNA] (ISOFORM 2)</scope>
    <scope>TISSUE SPECIFICITY</scope>
</reference>
<reference key="2">
    <citation type="submission" date="1999-09" db="EMBL/GenBank/DDBJ databases">
        <title>Homo sapiens 2,229,817bp genomic DNA of 6p21.3 HLA class I region.</title>
        <authorList>
            <person name="Shiina S."/>
            <person name="Tamiya G."/>
            <person name="Oka A."/>
            <person name="Inoko H."/>
        </authorList>
    </citation>
    <scope>NUCLEOTIDE SEQUENCE [LARGE SCALE GENOMIC DNA]</scope>
</reference>
<reference key="3">
    <citation type="submission" date="2002-07" db="EMBL/GenBank/DDBJ databases">
        <title>Genome diversity in HLA: a new strategy for detection of genetic polymorphisms in expressed genes within the HLA class III and class I regions.</title>
        <authorList>
            <person name="Shiina T."/>
            <person name="Ota M."/>
            <person name="Katsuyama Y."/>
            <person name="Hashimoto N."/>
            <person name="Inoko H."/>
        </authorList>
    </citation>
    <scope>NUCLEOTIDE SEQUENCE [LARGE SCALE GENOMIC DNA]</scope>
</reference>
<reference key="4">
    <citation type="journal article" date="2003" name="Nature">
        <title>The DNA sequence and analysis of human chromosome 6.</title>
        <authorList>
            <person name="Mungall A.J."/>
            <person name="Palmer S.A."/>
            <person name="Sims S.K."/>
            <person name="Edwards C.A."/>
            <person name="Ashurst J.L."/>
            <person name="Wilming L."/>
            <person name="Jones M.C."/>
            <person name="Horton R."/>
            <person name="Hunt S.E."/>
            <person name="Scott C.E."/>
            <person name="Gilbert J.G.R."/>
            <person name="Clamp M.E."/>
            <person name="Bethel G."/>
            <person name="Milne S."/>
            <person name="Ainscough R."/>
            <person name="Almeida J.P."/>
            <person name="Ambrose K.D."/>
            <person name="Andrews T.D."/>
            <person name="Ashwell R.I.S."/>
            <person name="Babbage A.K."/>
            <person name="Bagguley C.L."/>
            <person name="Bailey J."/>
            <person name="Banerjee R."/>
            <person name="Barker D.J."/>
            <person name="Barlow K.F."/>
            <person name="Bates K."/>
            <person name="Beare D.M."/>
            <person name="Beasley H."/>
            <person name="Beasley O."/>
            <person name="Bird C.P."/>
            <person name="Blakey S.E."/>
            <person name="Bray-Allen S."/>
            <person name="Brook J."/>
            <person name="Brown A.J."/>
            <person name="Brown J.Y."/>
            <person name="Burford D.C."/>
            <person name="Burrill W."/>
            <person name="Burton J."/>
            <person name="Carder C."/>
            <person name="Carter N.P."/>
            <person name="Chapman J.C."/>
            <person name="Clark S.Y."/>
            <person name="Clark G."/>
            <person name="Clee C.M."/>
            <person name="Clegg S."/>
            <person name="Cobley V."/>
            <person name="Collier R.E."/>
            <person name="Collins J.E."/>
            <person name="Colman L.K."/>
            <person name="Corby N.R."/>
            <person name="Coville G.J."/>
            <person name="Culley K.M."/>
            <person name="Dhami P."/>
            <person name="Davies J."/>
            <person name="Dunn M."/>
            <person name="Earthrowl M.E."/>
            <person name="Ellington A.E."/>
            <person name="Evans K.A."/>
            <person name="Faulkner L."/>
            <person name="Francis M.D."/>
            <person name="Frankish A."/>
            <person name="Frankland J."/>
            <person name="French L."/>
            <person name="Garner P."/>
            <person name="Garnett J."/>
            <person name="Ghori M.J."/>
            <person name="Gilby L.M."/>
            <person name="Gillson C.J."/>
            <person name="Glithero R.J."/>
            <person name="Grafham D.V."/>
            <person name="Grant M."/>
            <person name="Gribble S."/>
            <person name="Griffiths C."/>
            <person name="Griffiths M.N.D."/>
            <person name="Hall R."/>
            <person name="Halls K.S."/>
            <person name="Hammond S."/>
            <person name="Harley J.L."/>
            <person name="Hart E.A."/>
            <person name="Heath P.D."/>
            <person name="Heathcott R."/>
            <person name="Holmes S.J."/>
            <person name="Howden P.J."/>
            <person name="Howe K.L."/>
            <person name="Howell G.R."/>
            <person name="Huckle E."/>
            <person name="Humphray S.J."/>
            <person name="Humphries M.D."/>
            <person name="Hunt A.R."/>
            <person name="Johnson C.M."/>
            <person name="Joy A.A."/>
            <person name="Kay M."/>
            <person name="Keenan S.J."/>
            <person name="Kimberley A.M."/>
            <person name="King A."/>
            <person name="Laird G.K."/>
            <person name="Langford C."/>
            <person name="Lawlor S."/>
            <person name="Leongamornlert D.A."/>
            <person name="Leversha M."/>
            <person name="Lloyd C.R."/>
            <person name="Lloyd D.M."/>
            <person name="Loveland J.E."/>
            <person name="Lovell J."/>
            <person name="Martin S."/>
            <person name="Mashreghi-Mohammadi M."/>
            <person name="Maslen G.L."/>
            <person name="Matthews L."/>
            <person name="McCann O.T."/>
            <person name="McLaren S.J."/>
            <person name="McLay K."/>
            <person name="McMurray A."/>
            <person name="Moore M.J.F."/>
            <person name="Mullikin J.C."/>
            <person name="Niblett D."/>
            <person name="Nickerson T."/>
            <person name="Novik K.L."/>
            <person name="Oliver K."/>
            <person name="Overton-Larty E.K."/>
            <person name="Parker A."/>
            <person name="Patel R."/>
            <person name="Pearce A.V."/>
            <person name="Peck A.I."/>
            <person name="Phillimore B.J.C.T."/>
            <person name="Phillips S."/>
            <person name="Plumb R.W."/>
            <person name="Porter K.M."/>
            <person name="Ramsey Y."/>
            <person name="Ranby S.A."/>
            <person name="Rice C.M."/>
            <person name="Ross M.T."/>
            <person name="Searle S.M."/>
            <person name="Sehra H.K."/>
            <person name="Sheridan E."/>
            <person name="Skuce C.D."/>
            <person name="Smith S."/>
            <person name="Smith M."/>
            <person name="Spraggon L."/>
            <person name="Squares S.L."/>
            <person name="Steward C.A."/>
            <person name="Sycamore N."/>
            <person name="Tamlyn-Hall G."/>
            <person name="Tester J."/>
            <person name="Theaker A.J."/>
            <person name="Thomas D.W."/>
            <person name="Thorpe A."/>
            <person name="Tracey A."/>
            <person name="Tromans A."/>
            <person name="Tubby B."/>
            <person name="Wall M."/>
            <person name="Wallis J.M."/>
            <person name="West A.P."/>
            <person name="White S.S."/>
            <person name="Whitehead S.L."/>
            <person name="Whittaker H."/>
            <person name="Wild A."/>
            <person name="Willey D.J."/>
            <person name="Wilmer T.E."/>
            <person name="Wood J.M."/>
            <person name="Wray P.W."/>
            <person name="Wyatt J.C."/>
            <person name="Young L."/>
            <person name="Younger R.M."/>
            <person name="Bentley D.R."/>
            <person name="Coulson A."/>
            <person name="Durbin R.M."/>
            <person name="Hubbard T."/>
            <person name="Sulston J.E."/>
            <person name="Dunham I."/>
            <person name="Rogers J."/>
            <person name="Beck S."/>
        </authorList>
    </citation>
    <scope>NUCLEOTIDE SEQUENCE [LARGE SCALE GENOMIC DNA]</scope>
</reference>
<reference key="5">
    <citation type="journal article" date="2004" name="Genome Res.">
        <title>The status, quality, and expansion of the NIH full-length cDNA project: the Mammalian Gene Collection (MGC).</title>
        <authorList>
            <consortium name="The MGC Project Team"/>
        </authorList>
    </citation>
    <scope>NUCLEOTIDE SEQUENCE [LARGE SCALE MRNA] (ISOFORM 1)</scope>
    <source>
        <tissue>Embryonic stem cell</tissue>
        <tissue>Testis</tissue>
    </source>
</reference>
<reference key="6">
    <citation type="journal article" date="2007" name="BMC Genomics">
        <title>The full-ORF clone resource of the German cDNA consortium.</title>
        <authorList>
            <person name="Bechtel S."/>
            <person name="Rosenfelder H."/>
            <person name="Duda A."/>
            <person name="Schmidt C.P."/>
            <person name="Ernst U."/>
            <person name="Wellenreuther R."/>
            <person name="Mehrle A."/>
            <person name="Schuster C."/>
            <person name="Bahr A."/>
            <person name="Bloecker H."/>
            <person name="Heubner D."/>
            <person name="Hoerlein A."/>
            <person name="Michel G."/>
            <person name="Wedler H."/>
            <person name="Koehrer K."/>
            <person name="Ottenwaelder B."/>
            <person name="Poustka A."/>
            <person name="Wiemann S."/>
            <person name="Schupp I."/>
        </authorList>
    </citation>
    <scope>NUCLEOTIDE SEQUENCE [LARGE SCALE MRNA] OF 160-845 (ISOFORM 1)</scope>
    <source>
        <tissue>Melanoma</tissue>
    </source>
</reference>
<reference key="7">
    <citation type="journal article" date="2006" name="Cell">
        <title>Global, in vivo, and site-specific phosphorylation dynamics in signaling networks.</title>
        <authorList>
            <person name="Olsen J.V."/>
            <person name="Blagoev B."/>
            <person name="Gnad F."/>
            <person name="Macek B."/>
            <person name="Kumar C."/>
            <person name="Mortensen P."/>
            <person name="Mann M."/>
        </authorList>
    </citation>
    <scope>PHOSPHORYLATION [LARGE SCALE ANALYSIS] AT SER-105; THR-108; SER-109; SER-140 AND SER-228</scope>
    <scope>IDENTIFICATION BY MASS SPECTROMETRY [LARGE SCALE ANALYSIS]</scope>
    <source>
        <tissue>Cervix carcinoma</tissue>
    </source>
</reference>
<reference key="8">
    <citation type="journal article" date="2006" name="Nat. Biotechnol.">
        <title>A probability-based approach for high-throughput protein phosphorylation analysis and site localization.</title>
        <authorList>
            <person name="Beausoleil S.A."/>
            <person name="Villen J."/>
            <person name="Gerber S.A."/>
            <person name="Rush J."/>
            <person name="Gygi S.P."/>
        </authorList>
    </citation>
    <scope>PHOSPHORYLATION [LARGE SCALE ANALYSIS] AT SER-228</scope>
    <scope>IDENTIFICATION BY MASS SPECTROMETRY [LARGE SCALE ANALYSIS]</scope>
    <source>
        <tissue>Cervix carcinoma</tissue>
    </source>
</reference>
<reference key="9">
    <citation type="journal article" date="2007" name="Science">
        <title>ATM and ATR substrate analysis reveals extensive protein networks responsive to DNA damage.</title>
        <authorList>
            <person name="Matsuoka S."/>
            <person name="Ballif B.A."/>
            <person name="Smogorzewska A."/>
            <person name="McDonald E.R. III"/>
            <person name="Hurov K.E."/>
            <person name="Luo J."/>
            <person name="Bakalarski C.E."/>
            <person name="Zhao Z."/>
            <person name="Solimini N."/>
            <person name="Lerenthal Y."/>
            <person name="Shiloh Y."/>
            <person name="Gygi S.P."/>
            <person name="Elledge S.J."/>
        </authorList>
    </citation>
    <scope>PHOSPHORYLATION [LARGE SCALE ANALYSIS] AT SER-595</scope>
    <scope>IDENTIFICATION BY MASS SPECTROMETRY [LARGE SCALE ANALYSIS]</scope>
    <source>
        <tissue>Embryonic kidney</tissue>
    </source>
</reference>
<reference key="10">
    <citation type="journal article" date="2008" name="Biochem. J.">
        <title>The N-terminal region of ABC50 interacts with eukaryotic initiation factor eIF2 and is a target for regulatory phosphorylation by CK2.</title>
        <authorList>
            <person name="Paytubi S."/>
            <person name="Morrice N.A."/>
            <person name="Boudeau J."/>
            <person name="Proud C.G."/>
        </authorList>
    </citation>
    <scope>INTERACTION WITH EIF2S1</scope>
    <scope>ASSOCIATION WITH RIBOSOMES</scope>
    <scope>PHOSPHORYLATION AT SER-109 AND SER-140</scope>
    <scope>IDENTIFICATION BY MASS SPECTROMETRY</scope>
    <scope>MUTAGENESIS OF SER-109 AND SER-140</scope>
</reference>
<reference key="11">
    <citation type="journal article" date="2008" name="J. Proteome Res.">
        <title>Phosphoproteome of resting human platelets.</title>
        <authorList>
            <person name="Zahedi R.P."/>
            <person name="Lewandrowski U."/>
            <person name="Wiesner J."/>
            <person name="Wortelkamp S."/>
            <person name="Moebius J."/>
            <person name="Schuetz C."/>
            <person name="Walter U."/>
            <person name="Gambaryan S."/>
            <person name="Sickmann A."/>
        </authorList>
    </citation>
    <scope>IDENTIFICATION BY MASS SPECTROMETRY [LARGE SCALE ANALYSIS]</scope>
    <source>
        <tissue>Platelet</tissue>
    </source>
</reference>
<reference key="12">
    <citation type="journal article" date="2008" name="Proc. Natl. Acad. Sci. U.S.A.">
        <title>A quantitative atlas of mitotic phosphorylation.</title>
        <authorList>
            <person name="Dephoure N."/>
            <person name="Zhou C."/>
            <person name="Villen J."/>
            <person name="Beausoleil S.A."/>
            <person name="Bakalarski C.E."/>
            <person name="Elledge S.J."/>
            <person name="Gygi S.P."/>
        </authorList>
    </citation>
    <scope>PHOSPHORYLATION [LARGE SCALE ANALYSIS] AT SER-24 AND SER-228</scope>
    <scope>IDENTIFICATION BY MASS SPECTROMETRY [LARGE SCALE ANALYSIS]</scope>
    <source>
        <tissue>Cervix carcinoma</tissue>
    </source>
</reference>
<reference key="13">
    <citation type="journal article" date="2008" name="Proteomics">
        <title>Large-scale phosphoproteome analysis of human liver tissue by enrichment and fractionation of phosphopeptides with strong anion exchange chromatography.</title>
        <authorList>
            <person name="Han G."/>
            <person name="Ye M."/>
            <person name="Zhou H."/>
            <person name="Jiang X."/>
            <person name="Feng S."/>
            <person name="Jiang X."/>
            <person name="Tian R."/>
            <person name="Wan D."/>
            <person name="Zou H."/>
            <person name="Gu J."/>
        </authorList>
    </citation>
    <scope>PHOSPHORYLATION [LARGE SCALE ANALYSIS] AT SER-228</scope>
    <scope>IDENTIFICATION BY MASS SPECTROMETRY [LARGE SCALE ANALYSIS]</scope>
    <source>
        <tissue>Liver</tissue>
    </source>
</reference>
<reference key="14">
    <citation type="journal article" date="2009" name="Anal. Chem.">
        <title>Lys-N and trypsin cover complementary parts of the phosphoproteome in a refined SCX-based approach.</title>
        <authorList>
            <person name="Gauci S."/>
            <person name="Helbig A.O."/>
            <person name="Slijper M."/>
            <person name="Krijgsveld J."/>
            <person name="Heck A.J."/>
            <person name="Mohammed S."/>
        </authorList>
    </citation>
    <scope>IDENTIFICATION BY MASS SPECTROMETRY [LARGE SCALE ANALYSIS]</scope>
</reference>
<reference key="15">
    <citation type="journal article" date="2009" name="J. Biol. Chem.">
        <title>ABC50 promotes translation initiation in mammalian cells.</title>
        <authorList>
            <person name="Paytubi S."/>
            <person name="Wang X."/>
            <person name="Lam Y.W."/>
            <person name="Izquierdo L."/>
            <person name="Hunter M.J."/>
            <person name="Jan E."/>
            <person name="Hundal H.S."/>
            <person name="Proud C.G."/>
        </authorList>
    </citation>
    <scope>FUNCTION</scope>
    <scope>ATP-BINDING</scope>
    <scope>ASSOCIATION WITH RIBOSOMES</scope>
    <scope>MUTAGENESIS OF LYS-342; GLN-367; GLY-454; GLU-477; HIS-506; LYS-664; GLN-695; GLY-745; GLU-768 AND HIS-797</scope>
    <scope>SUBCELLULAR LOCATION</scope>
</reference>
<reference key="16">
    <citation type="journal article" date="2009" name="Sci. Signal.">
        <title>Quantitative phosphoproteomic analysis of T cell receptor signaling reveals system-wide modulation of protein-protein interactions.</title>
        <authorList>
            <person name="Mayya V."/>
            <person name="Lundgren D.H."/>
            <person name="Hwang S.-I."/>
            <person name="Rezaul K."/>
            <person name="Wu L."/>
            <person name="Eng J.K."/>
            <person name="Rodionov V."/>
            <person name="Han D.K."/>
        </authorList>
    </citation>
    <scope>PHOSPHORYLATION [LARGE SCALE ANALYSIS] AT THR-108; SER-109; SER-140 AND SER-228</scope>
    <scope>IDENTIFICATION BY MASS SPECTROMETRY [LARGE SCALE ANALYSIS]</scope>
    <source>
        <tissue>Leukemic T-cell</tissue>
    </source>
</reference>
<reference key="17">
    <citation type="journal article" date="2010" name="Sci. Signal.">
        <title>Quantitative phosphoproteomics reveals widespread full phosphorylation site occupancy during mitosis.</title>
        <authorList>
            <person name="Olsen J.V."/>
            <person name="Vermeulen M."/>
            <person name="Santamaria A."/>
            <person name="Kumar C."/>
            <person name="Miller M.L."/>
            <person name="Jensen L.J."/>
            <person name="Gnad F."/>
            <person name="Cox J."/>
            <person name="Jensen T.S."/>
            <person name="Nigg E.A."/>
            <person name="Brunak S."/>
            <person name="Mann M."/>
        </authorList>
    </citation>
    <scope>PHOSPHORYLATION [LARGE SCALE ANALYSIS] AT SER-22; SER-105; THR-108; SER-109; SER-140 AND SER-228</scope>
    <scope>IDENTIFICATION BY MASS SPECTROMETRY [LARGE SCALE ANALYSIS]</scope>
    <source>
        <tissue>Cervix carcinoma</tissue>
    </source>
</reference>
<reference key="18">
    <citation type="journal article" date="2011" name="BMC Syst. Biol.">
        <title>Initial characterization of the human central proteome.</title>
        <authorList>
            <person name="Burkard T.R."/>
            <person name="Planyavsky M."/>
            <person name="Kaupe I."/>
            <person name="Breitwieser F.P."/>
            <person name="Buerckstuemmer T."/>
            <person name="Bennett K.L."/>
            <person name="Superti-Furga G."/>
            <person name="Colinge J."/>
        </authorList>
    </citation>
    <scope>IDENTIFICATION BY MASS SPECTROMETRY [LARGE SCALE ANALYSIS]</scope>
</reference>
<reference key="19">
    <citation type="journal article" date="2011" name="Sci. Signal.">
        <title>System-wide temporal characterization of the proteome and phosphoproteome of human embryonic stem cell differentiation.</title>
        <authorList>
            <person name="Rigbolt K.T."/>
            <person name="Prokhorova T.A."/>
            <person name="Akimov V."/>
            <person name="Henningsen J."/>
            <person name="Johansen P.T."/>
            <person name="Kratchmarova I."/>
            <person name="Kassem M."/>
            <person name="Mann M."/>
            <person name="Olsen J.V."/>
            <person name="Blagoev B."/>
        </authorList>
    </citation>
    <scope>PHOSPHORYLATION [LARGE SCALE ANALYSIS] AT THR-108; SER-109; SER-140; SER-166 AND SER-228</scope>
    <scope>IDENTIFICATION BY MASS SPECTROMETRY [LARGE SCALE ANALYSIS]</scope>
</reference>
<reference key="20">
    <citation type="journal article" date="2013" name="J. Proteome Res.">
        <title>Toward a comprehensive characterization of a human cancer cell phosphoproteome.</title>
        <authorList>
            <person name="Zhou H."/>
            <person name="Di Palma S."/>
            <person name="Preisinger C."/>
            <person name="Peng M."/>
            <person name="Polat A.N."/>
            <person name="Heck A.J."/>
            <person name="Mohammed S."/>
        </authorList>
    </citation>
    <scope>PHOSPHORYLATION [LARGE SCALE ANALYSIS] AT SER-22; SER-105; THR-108; SER-109; SER-140; SER-166; SER-228 AND SER-595</scope>
    <scope>IDENTIFICATION BY MASS SPECTROMETRY [LARGE SCALE ANALYSIS]</scope>
    <source>
        <tissue>Cervix carcinoma</tissue>
        <tissue>Erythroleukemia</tissue>
    </source>
</reference>
<reference key="21">
    <citation type="journal article" date="2014" name="J. Proteomics">
        <title>An enzyme assisted RP-RPLC approach for in-depth analysis of human liver phosphoproteome.</title>
        <authorList>
            <person name="Bian Y."/>
            <person name="Song C."/>
            <person name="Cheng K."/>
            <person name="Dong M."/>
            <person name="Wang F."/>
            <person name="Huang J."/>
            <person name="Sun D."/>
            <person name="Wang L."/>
            <person name="Ye M."/>
            <person name="Zou H."/>
        </authorList>
    </citation>
    <scope>PHOSPHORYLATION [LARGE SCALE ANALYSIS] AT SER-105 AND THR-108</scope>
    <scope>IDENTIFICATION BY MASS SPECTROMETRY [LARGE SCALE ANALYSIS]</scope>
    <source>
        <tissue>Liver</tissue>
    </source>
</reference>
<accession>Q8NE71</accession>
<accession>A2BF75</accession>
<accession>O14897</accession>
<accession>Q69YP6</accession>
<evidence type="ECO:0000255" key="1">
    <source>
        <dbReference type="PROSITE-ProRule" id="PRU00434"/>
    </source>
</evidence>
<evidence type="ECO:0000256" key="2">
    <source>
        <dbReference type="SAM" id="MobiDB-lite"/>
    </source>
</evidence>
<evidence type="ECO:0000269" key="3">
    <source>
    </source>
</evidence>
<evidence type="ECO:0000269" key="4">
    <source>
    </source>
</evidence>
<evidence type="ECO:0000269" key="5">
    <source>
    </source>
</evidence>
<evidence type="ECO:0000303" key="6">
    <source>
    </source>
</evidence>
<evidence type="ECO:0000305" key="7"/>
<evidence type="ECO:0007744" key="8">
    <source>
    </source>
</evidence>
<evidence type="ECO:0007744" key="9">
    <source>
    </source>
</evidence>
<evidence type="ECO:0007744" key="10">
    <source>
    </source>
</evidence>
<evidence type="ECO:0007744" key="11">
    <source>
    </source>
</evidence>
<evidence type="ECO:0007744" key="12">
    <source>
    </source>
</evidence>
<evidence type="ECO:0007744" key="13">
    <source>
    </source>
</evidence>
<evidence type="ECO:0007744" key="14">
    <source>
    </source>
</evidence>
<evidence type="ECO:0007744" key="15">
    <source>
    </source>
</evidence>
<evidence type="ECO:0007744" key="16">
    <source>
    </source>
</evidence>
<evidence type="ECO:0007744" key="17">
    <source>
    </source>
</evidence>
<evidence type="ECO:0007829" key="18">
    <source>
        <dbReference type="PDB" id="5ZXD"/>
    </source>
</evidence>
<organism>
    <name type="scientific">Homo sapiens</name>
    <name type="common">Human</name>
    <dbReference type="NCBI Taxonomy" id="9606"/>
    <lineage>
        <taxon>Eukaryota</taxon>
        <taxon>Metazoa</taxon>
        <taxon>Chordata</taxon>
        <taxon>Craniata</taxon>
        <taxon>Vertebrata</taxon>
        <taxon>Euteleostomi</taxon>
        <taxon>Mammalia</taxon>
        <taxon>Eutheria</taxon>
        <taxon>Euarchontoglires</taxon>
        <taxon>Primates</taxon>
        <taxon>Haplorrhini</taxon>
        <taxon>Catarrhini</taxon>
        <taxon>Hominidae</taxon>
        <taxon>Homo</taxon>
    </lineage>
</organism>